<organism>
    <name type="scientific">Mus musculus</name>
    <name type="common">Mouse</name>
    <dbReference type="NCBI Taxonomy" id="10090"/>
    <lineage>
        <taxon>Eukaryota</taxon>
        <taxon>Metazoa</taxon>
        <taxon>Chordata</taxon>
        <taxon>Craniata</taxon>
        <taxon>Vertebrata</taxon>
        <taxon>Euteleostomi</taxon>
        <taxon>Mammalia</taxon>
        <taxon>Eutheria</taxon>
        <taxon>Euarchontoglires</taxon>
        <taxon>Glires</taxon>
        <taxon>Rodentia</taxon>
        <taxon>Myomorpha</taxon>
        <taxon>Muroidea</taxon>
        <taxon>Muridae</taxon>
        <taxon>Murinae</taxon>
        <taxon>Mus</taxon>
        <taxon>Mus</taxon>
    </lineage>
</organism>
<accession>E9Q9H8</accession>
<accession>B2RWD4</accession>
<evidence type="ECO:0000250" key="1">
    <source>
        <dbReference type="UniProtKB" id="Q96DZ7"/>
    </source>
</evidence>
<evidence type="ECO:0000255" key="2"/>
<evidence type="ECO:0000269" key="3">
    <source>
    </source>
</evidence>
<evidence type="ECO:0000269" key="4">
    <source>
    </source>
</evidence>
<evidence type="ECO:0000305" key="5"/>
<proteinExistence type="evidence at protein level"/>
<keyword id="KW-0966">Cell projection</keyword>
<keyword id="KW-0963">Cytoplasm</keyword>
<keyword id="KW-0206">Cytoskeleton</keyword>
<keyword id="KW-0325">Glycoprotein</keyword>
<keyword id="KW-0458">Lysosome</keyword>
<keyword id="KW-0472">Membrane</keyword>
<keyword id="KW-1185">Reference proteome</keyword>
<keyword id="KW-0812">Transmembrane</keyword>
<keyword id="KW-1133">Transmembrane helix</keyword>
<comment type="function">
    <text evidence="3 4">Negatively regulates vacuolar (H+)-ATPase (V-ATPase) activity by interacting with members of V-ATPase V0 complex and hence inhibiting V1-V0 assembly (PubMed:38555350). Required for multinucleation during osteoclast differentiation (PubMed:38016540).</text>
</comment>
<comment type="subunit">
    <text evidence="3 4">May form homodimers and homooligomers (PubMed:38016540). Interacts with integrins ITGAV and ITGB3 (PubMed:38016540). Interacts with components of members of the V0 complex of vacuolar(H+)-ATPase (V-ATPase), including ATP6V0B and ATP6V0D2; this interaction inhibits V1-V0 complex assembly (PubMed:38555350).</text>
</comment>
<comment type="subcellular location">
    <subcellularLocation>
        <location evidence="4">Lysosome membrane</location>
        <topology evidence="5">Multi-pass membrane protein</topology>
    </subcellularLocation>
    <subcellularLocation>
        <location evidence="3">Cytoplasm</location>
        <location evidence="3">Cytoskeleton</location>
    </subcellularLocation>
    <subcellularLocation>
        <location evidence="3">Cell projection</location>
        <location evidence="3">Filopodium</location>
    </subcellularLocation>
    <text evidence="3">In osteoclasts, localizes not only to the actin ring, but also to the filopodia, the stretched structures for searching cells to fuse, and the fusopod, the cytoplasmic bridge for contacting other osteoclasts to fuse.</text>
</comment>
<comment type="tissue specificity">
    <text evidence="3 4">Predominantly expressed in osteoclasts (at protein level) (PubMed:38016540). Also expressed in white adipose tissue, as well as in bone marrow-derived macrophages (PubMed:38016540, PubMed:38555350).</text>
</comment>
<comment type="developmental stage">
    <text evidence="3">Strongly up-regulated in macrophages in the late phase of osteoclast differentiation, induced in vitro by TNFSF11/RANKL.</text>
</comment>
<comment type="induction">
    <text evidence="4">Up-regulated in gonadal white adipose tissue after high-fat diet. Up-regulated by oxidized LDL in RAW 264.7 cells, a macrophage cell line (at protein level).</text>
</comment>
<comment type="disruption phenotype">
    <text evidence="3 4">Knockout mice are born at the Mendelian rate and show no overt phenotype (PubMed:38016540). Animals exhibit higher bone mass compared to that of wild-type animals of the same age, because of impaired osteoclast differentiation (multinucleation) (PubMed:38016540). When fed a normal chow diet, knockout mice show normal body weight, fat tissue mass, adipocyte size, or body composition. The knockout does not affect energy expenditure, food intake, physical activity, nor fecal lipid excretion (PubMed:38555350). When fed on high fat-diet, knockout animals show reduced weight gain compared to wild-type littermates. They demonstrate higher energy expenditure compared to wild-type, without affecting food intake, physical activity, and fecal fat excretion, as well as improved insulin sensitivity. Their gonadal white adipose tissue shows decreased inflammation and decreased global macrophage infiltration, with different subsets of infiltrating macrophages: less lipid-associated macrophages and more restorative macrophages. The resolution and clearance of dying/dead adipocytes by macrophages is increased in knockout mice. Knockout animals adapt to high-fat feeding through adipocyte hyperplasia, rather than hypertrophy. Of note, all experiments were performed in male mice (PubMed:38555350).</text>
</comment>
<comment type="similarity">
    <text evidence="5">Belongs to the L6 tetraspanin family.</text>
</comment>
<protein>
    <recommendedName>
        <fullName>Transmembrane 4 L6 family member 19</fullName>
    </recommendedName>
    <alternativeName>
        <fullName>Osteoclast maturation-associated gene 4 protein</fullName>
    </alternativeName>
    <alternativeName>
        <fullName>Tetraspan membrane protein OCTM4</fullName>
    </alternativeName>
</protein>
<sequence length="206" mass="22314">MLSFSRVVNCSRTCSRFLGLSLGTASLCAAGANIALLFPNWDVTYLMRGLIGKHAMLGSGLWGGGLMVLLAATLISMTGSFSKSAPCLQVLIALLSSGLALLGAVICFVTSGVALKDGPFCMFDVSSFNQTQAWKFGYPFKDLHNRNYLYDRSLWTSVCLEPSKAVVWHVAFFSILLCISLLQLLLVAIHLVNSILGLFCSFCEKH</sequence>
<feature type="chain" id="PRO_0000461154" description="Transmembrane 4 L6 family member 19">
    <location>
        <begin position="1"/>
        <end position="206"/>
    </location>
</feature>
<feature type="topological domain" description="Cytoplasmic" evidence="5">
    <location>
        <begin position="1"/>
        <end position="16"/>
    </location>
</feature>
<feature type="transmembrane region" description="Helical" evidence="2">
    <location>
        <begin position="17"/>
        <end position="37"/>
    </location>
</feature>
<feature type="topological domain" description="Extracellular" evidence="5">
    <location>
        <begin position="38"/>
        <end position="54"/>
    </location>
</feature>
<feature type="transmembrane region" description="Helical" evidence="2">
    <location>
        <begin position="55"/>
        <end position="75"/>
    </location>
</feature>
<feature type="topological domain" description="Cytoplasmic" evidence="5">
    <location>
        <begin position="76"/>
        <end position="89"/>
    </location>
</feature>
<feature type="transmembrane region" description="Helical" evidence="2">
    <location>
        <begin position="90"/>
        <end position="110"/>
    </location>
</feature>
<feature type="topological domain" description="Extracellular" evidence="5">
    <location>
        <begin position="111"/>
        <end position="171"/>
    </location>
</feature>
<feature type="transmembrane region" description="Helical" evidence="2">
    <location>
        <begin position="172"/>
        <end position="192"/>
    </location>
</feature>
<feature type="topological domain" description="Cytoplasmic" evidence="5">
    <location>
        <begin position="193"/>
        <end position="206"/>
    </location>
</feature>
<feature type="region of interest" description="Important for homodimerization" evidence="1">
    <location>
        <begin position="182"/>
        <end position="192"/>
    </location>
</feature>
<feature type="glycosylation site" description="N-linked (GlcNAc...) asparagine" evidence="2">
    <location>
        <position position="129"/>
    </location>
</feature>
<feature type="sequence conflict" description="In Ref. 2; AAI47728/AAI47730." evidence="5" ref="2">
    <original>S</original>
    <variation>A</variation>
    <location>
        <position position="163"/>
    </location>
</feature>
<reference key="1">
    <citation type="journal article" date="2009" name="PLoS Biol.">
        <title>Lineage-specific biology revealed by a finished genome assembly of the mouse.</title>
        <authorList>
            <person name="Church D.M."/>
            <person name="Goodstadt L."/>
            <person name="Hillier L.W."/>
            <person name="Zody M.C."/>
            <person name="Goldstein S."/>
            <person name="She X."/>
            <person name="Bult C.J."/>
            <person name="Agarwala R."/>
            <person name="Cherry J.L."/>
            <person name="DiCuccio M."/>
            <person name="Hlavina W."/>
            <person name="Kapustin Y."/>
            <person name="Meric P."/>
            <person name="Maglott D."/>
            <person name="Birtle Z."/>
            <person name="Marques A.C."/>
            <person name="Graves T."/>
            <person name="Zhou S."/>
            <person name="Teague B."/>
            <person name="Potamousis K."/>
            <person name="Churas C."/>
            <person name="Place M."/>
            <person name="Herschleb J."/>
            <person name="Runnheim R."/>
            <person name="Forrest D."/>
            <person name="Amos-Landgraf J."/>
            <person name="Schwartz D.C."/>
            <person name="Cheng Z."/>
            <person name="Lindblad-Toh K."/>
            <person name="Eichler E.E."/>
            <person name="Ponting C.P."/>
        </authorList>
    </citation>
    <scope>NUCLEOTIDE SEQUENCE [LARGE SCALE GENOMIC DNA]</scope>
    <source>
        <strain>C57BL/6J</strain>
    </source>
</reference>
<reference key="2">
    <citation type="journal article" date="2004" name="Genome Res.">
        <title>The status, quality, and expansion of the NIH full-length cDNA project: the Mammalian Gene Collection (MGC).</title>
        <authorList>
            <consortium name="The MGC Project Team"/>
        </authorList>
    </citation>
    <scope>NUCLEOTIDE SEQUENCE [LARGE SCALE MRNA]</scope>
    <source>
        <tissue>Brain</tissue>
    </source>
</reference>
<reference key="3">
    <citation type="journal article" date="2024" name="Metabolism">
        <title>Tm4sf19 deficiency inhibits osteoclast multinucleation and prevents bone loss.</title>
        <authorList>
            <person name="Park S."/>
            <person name="Heo J.S."/>
            <person name="Mizuno S."/>
            <person name="Kim M."/>
            <person name="An H."/>
            <person name="Hong E."/>
            <person name="Kang M.G."/>
            <person name="Kim J."/>
            <person name="Yun R."/>
            <person name="Park H."/>
            <person name="Noh E.H."/>
            <person name="Lee M.J."/>
            <person name="Yoon K."/>
            <person name="Kim P."/>
            <person name="Son M."/>
            <person name="Pang K."/>
            <person name="Lee J."/>
            <person name="Park J."/>
            <person name="Ooshima A."/>
            <person name="Kim T.J."/>
            <person name="Park J.Y."/>
            <person name="Yang K.M."/>
            <person name="Myung S.J."/>
            <person name="Bae H."/>
            <person name="Lee K.M."/>
            <person name="Letterio J."/>
            <person name="Park S.H."/>
            <person name="Takahashi S."/>
            <person name="Kim S.J."/>
        </authorList>
    </citation>
    <scope>FUNCTION</scope>
    <scope>HOMODIMERIZATION</scope>
    <scope>INTERACTION WITH ITGAV AND ITGB3</scope>
    <scope>SUBCELLULAR LOCATION</scope>
    <scope>DEVELOPMENTAL STAGE</scope>
</reference>
<reference key="4">
    <citation type="journal article" date="2024" name="Nat. Commun.">
        <title>TM4SF19-mediated control of lysosomal activity in macrophages contributes to obesity-induced inflammation and metabolic dysfunction.</title>
        <authorList>
            <person name="Choi C."/>
            <person name="Jeong Y.L."/>
            <person name="Park K.M."/>
            <person name="Kim M."/>
            <person name="Kim S."/>
            <person name="Jo H."/>
            <person name="Lee S."/>
            <person name="Kim H."/>
            <person name="Choi G."/>
            <person name="Choi Y.H."/>
            <person name="Seong J.K."/>
            <person name="Namgoong S."/>
            <person name="Chung Y."/>
            <person name="Jung Y.S."/>
            <person name="Granneman J.G."/>
            <person name="Hyun Y.M."/>
            <person name="Kim J.K."/>
            <person name="Lee Y.H."/>
        </authorList>
    </citation>
    <scope>FUNCTION</scope>
    <scope>SUBCELLULAR LOCATION</scope>
    <scope>TISSUE SPECIFICITY</scope>
    <scope>INDUCTION BY OXIDIZED LDL</scope>
    <scope>INTERACTION WITH ATP6V0B AND ATP6V0D2</scope>
    <scope>DISRUPTION PHENOTYPE</scope>
</reference>
<dbReference type="EMBL" id="GL456175">
    <property type="status" value="NOT_ANNOTATED_CDS"/>
    <property type="molecule type" value="Genomic_DNA"/>
</dbReference>
<dbReference type="EMBL" id="BC147727">
    <property type="protein sequence ID" value="AAI47728.1"/>
    <property type="molecule type" value="mRNA"/>
</dbReference>
<dbReference type="EMBL" id="BC147729">
    <property type="protein sequence ID" value="AAI47730.1"/>
    <property type="molecule type" value="mRNA"/>
</dbReference>
<dbReference type="CCDS" id="CCDS49827.1"/>
<dbReference type="RefSeq" id="NP_001153874.1">
    <property type="nucleotide sequence ID" value="NM_001160402.1"/>
</dbReference>
<dbReference type="RefSeq" id="XP_006522284.1">
    <property type="nucleotide sequence ID" value="XM_006522221.4"/>
</dbReference>
<dbReference type="FunCoup" id="E9Q9H8">
    <property type="interactions" value="23"/>
</dbReference>
<dbReference type="STRING" id="10090.ENSMUSP00000110802"/>
<dbReference type="PhosphoSitePlus" id="E9Q9H8"/>
<dbReference type="PaxDb" id="10090-ENSMUSP00000110802"/>
<dbReference type="Ensembl" id="ENSMUST00000115149.3">
    <property type="protein sequence ID" value="ENSMUSP00000110802.3"/>
    <property type="gene ID" value="ENSMUSG00000079625.3"/>
</dbReference>
<dbReference type="GeneID" id="277203"/>
<dbReference type="KEGG" id="mmu:277203"/>
<dbReference type="UCSC" id="uc012ael.1">
    <property type="organism name" value="mouse"/>
</dbReference>
<dbReference type="AGR" id="MGI:3645933"/>
<dbReference type="CTD" id="116211"/>
<dbReference type="MGI" id="MGI:3645933">
    <property type="gene designation" value="Tm4sf19"/>
</dbReference>
<dbReference type="VEuPathDB" id="HostDB:ENSMUSG00000079625"/>
<dbReference type="eggNOG" id="ENOG502S1UJ">
    <property type="taxonomic scope" value="Eukaryota"/>
</dbReference>
<dbReference type="GeneTree" id="ENSGT01030000234590"/>
<dbReference type="HOGENOM" id="CLU_087168_0_0_1"/>
<dbReference type="InParanoid" id="E9Q9H8"/>
<dbReference type="OMA" id="IINGCFG"/>
<dbReference type="OrthoDB" id="9897613at2759"/>
<dbReference type="PhylomeDB" id="E9Q9H8"/>
<dbReference type="TreeFam" id="TF331371"/>
<dbReference type="BioGRID-ORCS" id="277203">
    <property type="hits" value="2 hits in 78 CRISPR screens"/>
</dbReference>
<dbReference type="Proteomes" id="UP000000589">
    <property type="component" value="Chromosome 16"/>
</dbReference>
<dbReference type="RNAct" id="E9Q9H8">
    <property type="molecule type" value="Protein"/>
</dbReference>
<dbReference type="Bgee" id="ENSMUSG00000079625">
    <property type="expression patterns" value="Expressed in mesodermal cell in embryo and 5 other cell types or tissues"/>
</dbReference>
<dbReference type="GO" id="GO:0015629">
    <property type="term" value="C:actin cytoskeleton"/>
    <property type="evidence" value="ECO:0000314"/>
    <property type="project" value="UniProtKB"/>
</dbReference>
<dbReference type="GO" id="GO:0030175">
    <property type="term" value="C:filopodium"/>
    <property type="evidence" value="ECO:0000314"/>
    <property type="project" value="UniProtKB"/>
</dbReference>
<dbReference type="GO" id="GO:0005765">
    <property type="term" value="C:lysosomal membrane"/>
    <property type="evidence" value="ECO:0007669"/>
    <property type="project" value="UniProtKB-SubCell"/>
</dbReference>
<dbReference type="GO" id="GO:0042803">
    <property type="term" value="F:protein homodimerization activity"/>
    <property type="evidence" value="ECO:0000314"/>
    <property type="project" value="UniProtKB"/>
</dbReference>
<dbReference type="GO" id="GO:0045672">
    <property type="term" value="P:positive regulation of osteoclast differentiation"/>
    <property type="evidence" value="ECO:0000315"/>
    <property type="project" value="UniProtKB"/>
</dbReference>
<dbReference type="InterPro" id="IPR008661">
    <property type="entry name" value="L6_membrane"/>
</dbReference>
<dbReference type="PANTHER" id="PTHR14198">
    <property type="entry name" value="TRANSMEMBRANE 4 L6 FAMILY MEMBER 1-RELATED"/>
    <property type="match status" value="1"/>
</dbReference>
<dbReference type="PANTHER" id="PTHR14198:SF22">
    <property type="entry name" value="TRANSMEMBRANE 4 L6 FAMILY MEMBER 19"/>
    <property type="match status" value="1"/>
</dbReference>
<dbReference type="Pfam" id="PF05805">
    <property type="entry name" value="L6_membrane"/>
    <property type="match status" value="1"/>
</dbReference>
<gene>
    <name type="primary">Tm4sf19</name>
</gene>
<name>T4S19_MOUSE</name>